<comment type="catalytic activity">
    <reaction evidence="1">
        <text>(6S)-5,6,7,8-tetrahydrofolate + formate + ATP = (6R)-10-formyltetrahydrofolate + ADP + phosphate</text>
        <dbReference type="Rhea" id="RHEA:20221"/>
        <dbReference type="ChEBI" id="CHEBI:15740"/>
        <dbReference type="ChEBI" id="CHEBI:30616"/>
        <dbReference type="ChEBI" id="CHEBI:43474"/>
        <dbReference type="ChEBI" id="CHEBI:57453"/>
        <dbReference type="ChEBI" id="CHEBI:195366"/>
        <dbReference type="ChEBI" id="CHEBI:456216"/>
        <dbReference type="EC" id="6.3.4.3"/>
    </reaction>
</comment>
<comment type="pathway">
    <text evidence="1">One-carbon metabolism; tetrahydrofolate interconversion.</text>
</comment>
<comment type="similarity">
    <text evidence="1">Belongs to the formate--tetrahydrofolate ligase family.</text>
</comment>
<dbReference type="EC" id="6.3.4.3" evidence="1"/>
<dbReference type="EMBL" id="CP000703">
    <property type="protein sequence ID" value="ABQ49577.1"/>
    <property type="molecule type" value="Genomic_DNA"/>
</dbReference>
<dbReference type="RefSeq" id="WP_000149407.1">
    <property type="nucleotide sequence ID" value="NC_009487.1"/>
</dbReference>
<dbReference type="SMR" id="A5ITQ4"/>
<dbReference type="KEGG" id="saj:SaurJH9_1787"/>
<dbReference type="HOGENOM" id="CLU_003601_3_3_9"/>
<dbReference type="UniPathway" id="UPA00193"/>
<dbReference type="GO" id="GO:0005524">
    <property type="term" value="F:ATP binding"/>
    <property type="evidence" value="ECO:0007669"/>
    <property type="project" value="UniProtKB-UniRule"/>
</dbReference>
<dbReference type="GO" id="GO:0004329">
    <property type="term" value="F:formate-tetrahydrofolate ligase activity"/>
    <property type="evidence" value="ECO:0007669"/>
    <property type="project" value="UniProtKB-UniRule"/>
</dbReference>
<dbReference type="GO" id="GO:0035999">
    <property type="term" value="P:tetrahydrofolate interconversion"/>
    <property type="evidence" value="ECO:0007669"/>
    <property type="project" value="UniProtKB-UniRule"/>
</dbReference>
<dbReference type="CDD" id="cd00477">
    <property type="entry name" value="FTHFS"/>
    <property type="match status" value="1"/>
</dbReference>
<dbReference type="FunFam" id="3.30.1510.10:FF:000001">
    <property type="entry name" value="Formate--tetrahydrofolate ligase"/>
    <property type="match status" value="1"/>
</dbReference>
<dbReference type="FunFam" id="3.10.410.10:FF:000001">
    <property type="entry name" value="Putative formate--tetrahydrofolate ligase"/>
    <property type="match status" value="1"/>
</dbReference>
<dbReference type="Gene3D" id="3.30.1510.10">
    <property type="entry name" value="Domain 2, N(10)-formyltetrahydrofolate synthetase"/>
    <property type="match status" value="1"/>
</dbReference>
<dbReference type="Gene3D" id="3.10.410.10">
    <property type="entry name" value="Formyltetrahydrofolate synthetase, domain 3"/>
    <property type="match status" value="1"/>
</dbReference>
<dbReference type="Gene3D" id="3.40.50.300">
    <property type="entry name" value="P-loop containing nucleotide triphosphate hydrolases"/>
    <property type="match status" value="1"/>
</dbReference>
<dbReference type="HAMAP" id="MF_01543">
    <property type="entry name" value="FTHFS"/>
    <property type="match status" value="1"/>
</dbReference>
<dbReference type="InterPro" id="IPR000559">
    <property type="entry name" value="Formate_THF_ligase"/>
</dbReference>
<dbReference type="InterPro" id="IPR020628">
    <property type="entry name" value="Formate_THF_ligase_CS"/>
</dbReference>
<dbReference type="InterPro" id="IPR027417">
    <property type="entry name" value="P-loop_NTPase"/>
</dbReference>
<dbReference type="NCBIfam" id="NF010030">
    <property type="entry name" value="PRK13505.1"/>
    <property type="match status" value="1"/>
</dbReference>
<dbReference type="Pfam" id="PF01268">
    <property type="entry name" value="FTHFS"/>
    <property type="match status" value="1"/>
</dbReference>
<dbReference type="SUPFAM" id="SSF52540">
    <property type="entry name" value="P-loop containing nucleoside triphosphate hydrolases"/>
    <property type="match status" value="1"/>
</dbReference>
<dbReference type="PROSITE" id="PS00721">
    <property type="entry name" value="FTHFS_1"/>
    <property type="match status" value="1"/>
</dbReference>
<dbReference type="PROSITE" id="PS00722">
    <property type="entry name" value="FTHFS_2"/>
    <property type="match status" value="1"/>
</dbReference>
<feature type="chain" id="PRO_1000087660" description="Formate--tetrahydrofolate ligase">
    <location>
        <begin position="1"/>
        <end position="555"/>
    </location>
</feature>
<feature type="binding site" evidence="1">
    <location>
        <begin position="65"/>
        <end position="72"/>
    </location>
    <ligand>
        <name>ATP</name>
        <dbReference type="ChEBI" id="CHEBI:30616"/>
    </ligand>
</feature>
<evidence type="ECO:0000255" key="1">
    <source>
        <dbReference type="HAMAP-Rule" id="MF_01543"/>
    </source>
</evidence>
<protein>
    <recommendedName>
        <fullName evidence="1">Formate--tetrahydrofolate ligase</fullName>
        <ecNumber evidence="1">6.3.4.3</ecNumber>
    </recommendedName>
    <alternativeName>
        <fullName evidence="1">Formyltetrahydrofolate synthetase</fullName>
        <shortName evidence="1">FHS</shortName>
        <shortName evidence="1">FTHFS</shortName>
    </alternativeName>
</protein>
<sequence>MTHLSDLDIANQSTLQPIKDIAASVGISEDALEPYGHYKAKIDINKITPRENKGKVVLVTAMSPTPAGEGKSTVTVGLADAFHELNKNVMVALREPALGPTFGIKGGATGGGYAQVLPMEDINLHFNGDFHAITTANNALSAFIDNHIHQGNELGIDQRRIEWKRVLDMNDRALRHVNVGLGGPTNGVPREDGFNITVASEIMAILCLSRSIKDLKDKISRITIGYTRDRKPVTVADLKVQGALAMILKDAIKPNLVQSIEGTPALVHGGPFANIAHGCNSILATETARDLADIVVTEAGFGSDLGAEKFMDIKAREAGFDLAAVVVVATIRALKMHGGVAKDNLKEENVEAVKAGIVNLERHVNNIKKFGVEPVVAINAFIHDTDAEVEYVKSWAKENNVRIALTEVWEKGGKGGVDLANEVLEVIDQPNSFKPLYELELPLEQKIEKIVTEIYGGSKVTFSSKAQKQLKQFKENGWDNYPVCMAKTQYSFSDDQTLLGAPSGFEITIRELEAKTGAGFIVALTGAIMTMPGLPKKPAALNMDVTDDGHAIGLF</sequence>
<gene>
    <name evidence="1" type="primary">fhs</name>
    <name type="ordered locus">SaurJH9_1787</name>
</gene>
<proteinExistence type="inferred from homology"/>
<organism>
    <name type="scientific">Staphylococcus aureus (strain JH9)</name>
    <dbReference type="NCBI Taxonomy" id="359786"/>
    <lineage>
        <taxon>Bacteria</taxon>
        <taxon>Bacillati</taxon>
        <taxon>Bacillota</taxon>
        <taxon>Bacilli</taxon>
        <taxon>Bacillales</taxon>
        <taxon>Staphylococcaceae</taxon>
        <taxon>Staphylococcus</taxon>
    </lineage>
</organism>
<keyword id="KW-0067">ATP-binding</keyword>
<keyword id="KW-0436">Ligase</keyword>
<keyword id="KW-0547">Nucleotide-binding</keyword>
<keyword id="KW-0554">One-carbon metabolism</keyword>
<name>FTHS_STAA9</name>
<reference key="1">
    <citation type="submission" date="2007-05" db="EMBL/GenBank/DDBJ databases">
        <title>Complete sequence of chromosome of Staphylococcus aureus subsp. aureus JH9.</title>
        <authorList>
            <consortium name="US DOE Joint Genome Institute"/>
            <person name="Copeland A."/>
            <person name="Lucas S."/>
            <person name="Lapidus A."/>
            <person name="Barry K."/>
            <person name="Detter J.C."/>
            <person name="Glavina del Rio T."/>
            <person name="Hammon N."/>
            <person name="Israni S."/>
            <person name="Pitluck S."/>
            <person name="Chain P."/>
            <person name="Malfatti S."/>
            <person name="Shin M."/>
            <person name="Vergez L."/>
            <person name="Schmutz J."/>
            <person name="Larimer F."/>
            <person name="Land M."/>
            <person name="Hauser L."/>
            <person name="Kyrpides N."/>
            <person name="Kim E."/>
            <person name="Tomasz A."/>
            <person name="Richardson P."/>
        </authorList>
    </citation>
    <scope>NUCLEOTIDE SEQUENCE [LARGE SCALE GENOMIC DNA]</scope>
    <source>
        <strain>JH9</strain>
    </source>
</reference>
<accession>A5ITQ4</accession>